<keyword id="KW-0010">Activator</keyword>
<keyword id="KW-0235">DNA replication</keyword>
<keyword id="KW-0238">DNA-binding</keyword>
<keyword id="KW-0244">Early protein</keyword>
<keyword id="KW-1048">Host nucleus</keyword>
<keyword id="KW-1017">Isopeptide bond</keyword>
<keyword id="KW-0597">Phosphoprotein</keyword>
<keyword id="KW-0678">Repressor</keyword>
<keyword id="KW-0804">Transcription</keyword>
<keyword id="KW-0805">Transcription regulation</keyword>
<keyword id="KW-0832">Ubl conjugation</keyword>
<name>VE2_HPV5B</name>
<organism>
    <name type="scientific">Human papillomavirus type 5b</name>
    <dbReference type="NCBI Taxonomy" id="10599"/>
    <lineage>
        <taxon>Viruses</taxon>
        <taxon>Monodnaviria</taxon>
        <taxon>Shotokuvirae</taxon>
        <taxon>Cossaviricota</taxon>
        <taxon>Papovaviricetes</taxon>
        <taxon>Zurhausenvirales</taxon>
        <taxon>Papillomaviridae</taxon>
        <taxon>Firstpapillomavirinae</taxon>
        <taxon>Betapapillomavirus</taxon>
        <taxon>Betapapillomavirus 1</taxon>
    </lineage>
</organism>
<protein>
    <recommendedName>
        <fullName evidence="1">Regulatory protein E2</fullName>
    </recommendedName>
</protein>
<dbReference type="EMBL" id="D90252">
    <property type="protein sequence ID" value="BAA14295.1"/>
    <property type="molecule type" value="Genomic_DNA"/>
</dbReference>
<dbReference type="PIR" id="B40480">
    <property type="entry name" value="W2WLB5"/>
</dbReference>
<dbReference type="SMR" id="P26545"/>
<dbReference type="Proteomes" id="UP000007669">
    <property type="component" value="Genome"/>
</dbReference>
<dbReference type="GO" id="GO:0042025">
    <property type="term" value="C:host cell nucleus"/>
    <property type="evidence" value="ECO:0007669"/>
    <property type="project" value="UniProtKB-SubCell"/>
</dbReference>
<dbReference type="GO" id="GO:0003677">
    <property type="term" value="F:DNA binding"/>
    <property type="evidence" value="ECO:0007669"/>
    <property type="project" value="UniProtKB-UniRule"/>
</dbReference>
<dbReference type="GO" id="GO:0003700">
    <property type="term" value="F:DNA-binding transcription factor activity"/>
    <property type="evidence" value="ECO:0007669"/>
    <property type="project" value="UniProtKB-UniRule"/>
</dbReference>
<dbReference type="GO" id="GO:0000166">
    <property type="term" value="F:nucleotide binding"/>
    <property type="evidence" value="ECO:0007669"/>
    <property type="project" value="UniProtKB-UniRule"/>
</dbReference>
<dbReference type="GO" id="GO:0006260">
    <property type="term" value="P:DNA replication"/>
    <property type="evidence" value="ECO:0007669"/>
    <property type="project" value="UniProtKB-KW"/>
</dbReference>
<dbReference type="GO" id="GO:0006351">
    <property type="term" value="P:DNA-templated transcription"/>
    <property type="evidence" value="ECO:0007669"/>
    <property type="project" value="UniProtKB-UniRule"/>
</dbReference>
<dbReference type="GO" id="GO:0006275">
    <property type="term" value="P:regulation of DNA replication"/>
    <property type="evidence" value="ECO:0007669"/>
    <property type="project" value="UniProtKB-UniRule"/>
</dbReference>
<dbReference type="GO" id="GO:0039693">
    <property type="term" value="P:viral DNA genome replication"/>
    <property type="evidence" value="ECO:0007669"/>
    <property type="project" value="UniProtKB-UniRule"/>
</dbReference>
<dbReference type="Gene3D" id="3.30.70.330">
    <property type="match status" value="1"/>
</dbReference>
<dbReference type="Gene3D" id="1.10.287.30">
    <property type="entry name" value="E2 (early) protein, N terminal domain, subdomain 1"/>
    <property type="match status" value="1"/>
</dbReference>
<dbReference type="Gene3D" id="2.170.200.10">
    <property type="entry name" value="Papillomavirus E2 early protein domain"/>
    <property type="match status" value="1"/>
</dbReference>
<dbReference type="HAMAP" id="MF_04001">
    <property type="entry name" value="PPV_E2"/>
    <property type="match status" value="1"/>
</dbReference>
<dbReference type="InterPro" id="IPR035975">
    <property type="entry name" value="E2/EBNA1_C_sf"/>
</dbReference>
<dbReference type="InterPro" id="IPR012677">
    <property type="entry name" value="Nucleotide-bd_a/b_plait_sf"/>
</dbReference>
<dbReference type="InterPro" id="IPR000427">
    <property type="entry name" value="Papillomavirus_E2_C"/>
</dbReference>
<dbReference type="InterPro" id="IPR001866">
    <property type="entry name" value="PPV_E2_N"/>
</dbReference>
<dbReference type="InterPro" id="IPR033668">
    <property type="entry name" value="Reg_prot_E2"/>
</dbReference>
<dbReference type="InterPro" id="IPR036050">
    <property type="entry name" value="Regulatory_protein_E2_N"/>
</dbReference>
<dbReference type="InterPro" id="IPR042503">
    <property type="entry name" value="Regulatory_protein_E2_N_1"/>
</dbReference>
<dbReference type="InterPro" id="IPR042504">
    <property type="entry name" value="Regulatory_protein_E2_N_2"/>
</dbReference>
<dbReference type="Pfam" id="PF00511">
    <property type="entry name" value="PPV_E2_C"/>
    <property type="match status" value="1"/>
</dbReference>
<dbReference type="Pfam" id="PF00508">
    <property type="entry name" value="PPV_E2_N"/>
    <property type="match status" value="1"/>
</dbReference>
<dbReference type="SUPFAM" id="SSF51332">
    <property type="entry name" value="E2 regulatory, transactivation domain"/>
    <property type="match status" value="1"/>
</dbReference>
<dbReference type="SUPFAM" id="SSF54957">
    <property type="entry name" value="Viral DNA-binding domain"/>
    <property type="match status" value="1"/>
</dbReference>
<feature type="chain" id="PRO_0000133183" description="Regulatory protein E2">
    <location>
        <begin position="1"/>
        <end position="514"/>
    </location>
</feature>
<feature type="region of interest" description="Transactivation domain" evidence="1">
    <location>
        <begin position="1"/>
        <end position="201"/>
    </location>
</feature>
<feature type="region of interest" description="Disordered" evidence="2">
    <location>
        <begin position="196"/>
        <end position="424"/>
    </location>
</feature>
<feature type="region of interest" description="DNA-binding domain" evidence="1">
    <location>
        <begin position="430"/>
        <end position="514"/>
    </location>
</feature>
<feature type="compositionally biased region" description="Low complexity" evidence="2">
    <location>
        <begin position="213"/>
        <end position="231"/>
    </location>
</feature>
<feature type="compositionally biased region" description="Basic residues" evidence="2">
    <location>
        <begin position="248"/>
        <end position="284"/>
    </location>
</feature>
<feature type="compositionally biased region" description="Low complexity" evidence="2">
    <location>
        <begin position="285"/>
        <end position="299"/>
    </location>
</feature>
<feature type="compositionally biased region" description="Basic residues" evidence="2">
    <location>
        <begin position="323"/>
        <end position="333"/>
    </location>
</feature>
<feature type="compositionally biased region" description="Low complexity" evidence="2">
    <location>
        <begin position="334"/>
        <end position="343"/>
    </location>
</feature>
<feature type="cross-link" description="Glycyl lysine isopeptide (Lys-Gly) (interchain with G-Cter in SUMO)" evidence="1">
    <location>
        <position position="437"/>
    </location>
</feature>
<proteinExistence type="inferred from homology"/>
<accession>P26545</accession>
<organismHost>
    <name type="scientific">Homo sapiens</name>
    <name type="common">Human</name>
    <dbReference type="NCBI Taxonomy" id="9606"/>
</organismHost>
<reference key="1">
    <citation type="journal article" date="1991" name="Virology">
        <title>A subtype of human papillomavirus 5 (HPV-5b) and its subgenomic segment amplified in a carcinoma: nucleotide sequences and genomic organizations.</title>
        <authorList>
            <person name="Yabe Y."/>
            <person name="Sakai A."/>
            <person name="Hitsumoto T."/>
            <person name="Kato H."/>
            <person name="Ogura H."/>
        </authorList>
    </citation>
    <scope>NUCLEOTIDE SEQUENCE [GENOMIC DNA]</scope>
</reference>
<comment type="function">
    <text evidence="1">Plays a role in the initiation of viral DNA replication. A dimer of E2 interacts with a dimer of E1 in order to improve specificity of E1 DNA binding activity. Once the complex recognizes and binds DNA at specific sites, the E2 dimer is removed from DNA. E2 also regulates viral transcription through binding to the E2RE response element (5'-ACCNNNNNNGGT-3') present in multiple copies in the regulatory regions of the viral genome. Activates or represses transcription depending on E2RE's position with regards to proximal promoter elements including the TATA-box. Repression occurs by sterically hindering the assembly of the transcription initiation complex.</text>
</comment>
<comment type="subunit">
    <text evidence="1">Binds DNA as homodimer. Interacts with protein E1; this interaction greatly increases E1 DNA-binding activity. Interacts with protein L1; this interaction enhances E2-dependent replication and transcription activation. Interacts with protein L2; this interaction inhibits E2 transcriptional activity but not DNA replication function E2. Interacts with protein E7; this interaction inhibits E7 oncogenic activity. Interacts with host TAF1; this interaction modulates E2-dependent transcriptional regulation. Interacts with host BRD4; this interaction mediates E2 transcriptional activation function. Additionally, the interaction with host BRD4 on mitotic chromosomes mediates tethering of the viral genome. Interacts with host TOPBP1; this interaction is required for optimal viral DNA replication.</text>
</comment>
<comment type="subcellular location">
    <subcellularLocation>
        <location evidence="1">Host nucleus</location>
    </subcellularLocation>
</comment>
<comment type="PTM">
    <text evidence="1">Phosphorylated.</text>
</comment>
<comment type="PTM">
    <text evidence="1">Sumoylation plays a regulatory role in E2 transcriptional activity.</text>
</comment>
<comment type="similarity">
    <text evidence="1">Belongs to the papillomaviridae E2 protein family.</text>
</comment>
<gene>
    <name evidence="1" type="primary">E2</name>
</gene>
<sequence>MENLSERFNALQDQLMNIYEAAEQTLQAQIKHWQTLRKEAVLLYYAREKGVTRLGYQPVPVKAVSETKAKEAIAMVLQLESLQTSDFAHEPWTLVDTSTETFRSAPEGHFKKGPVPVEVIYDNDPDNANLYTMWTYVYYMDADDKWHKARSGVNHIGIYYLQGTFKNYYVLFADDAKRYGTTGEWEVKVNKDTVFAPVTSSTPPGSPGRQADTDTTAKTPTTSTTAVDSTSRQLTTSKQPQQTETRGRRYGRRPSSKSRRSQTQQRRSRSRHRSRSRSRSRSKSQTHTTWSTTRSRSTSVGKTRALTSRSRSRGRSPSTCRRGGGRSPRRRSRSPSTYSSCTTQRSQRARAESPTTRGARGSRGSRGGSRGGRLRRRGRSSSSSSPAHKRSRGGSAKLRGVSPGEVGGSLRSVSSKHTGRLGRLLEEARDPPVIIVKGAANTLKYFRNRAKIKYTGLFRSFSTTWSWVAGDGTERLGRPRMLISFSSYSQRRDFDEAVRYPKGVDKAYGNLDSL</sequence>
<evidence type="ECO:0000255" key="1">
    <source>
        <dbReference type="HAMAP-Rule" id="MF_04001"/>
    </source>
</evidence>
<evidence type="ECO:0000256" key="2">
    <source>
        <dbReference type="SAM" id="MobiDB-lite"/>
    </source>
</evidence>